<sequence>MANPKRKWSKARTGKRRSQWKLTVPNLVECPHCHSLKLLHRVCKECGHYTVRHKGERKSIEVLSVE</sequence>
<comment type="similarity">
    <text evidence="1">Belongs to the bacterial ribosomal protein bL32 family.</text>
</comment>
<name>RL32_ACET2</name>
<feature type="chain" id="PRO_0000296451" description="Large ribosomal subunit protein bL32">
    <location>
        <begin position="1"/>
        <end position="66"/>
    </location>
</feature>
<organism>
    <name type="scientific">Acetivibrio thermocellus (strain ATCC 27405 / DSM 1237 / JCM 9322 / NBRC 103400 / NCIMB 10682 / NRRL B-4536 / VPI 7372)</name>
    <name type="common">Clostridium thermocellum</name>
    <dbReference type="NCBI Taxonomy" id="203119"/>
    <lineage>
        <taxon>Bacteria</taxon>
        <taxon>Bacillati</taxon>
        <taxon>Bacillota</taxon>
        <taxon>Clostridia</taxon>
        <taxon>Eubacteriales</taxon>
        <taxon>Oscillospiraceae</taxon>
        <taxon>Acetivibrio</taxon>
    </lineage>
</organism>
<reference key="1">
    <citation type="submission" date="2007-02" db="EMBL/GenBank/DDBJ databases">
        <title>Complete sequence of Clostridium thermocellum ATCC 27405.</title>
        <authorList>
            <consortium name="US DOE Joint Genome Institute"/>
            <person name="Copeland A."/>
            <person name="Lucas S."/>
            <person name="Lapidus A."/>
            <person name="Barry K."/>
            <person name="Detter J.C."/>
            <person name="Glavina del Rio T."/>
            <person name="Hammon N."/>
            <person name="Israni S."/>
            <person name="Dalin E."/>
            <person name="Tice H."/>
            <person name="Pitluck S."/>
            <person name="Chertkov O."/>
            <person name="Brettin T."/>
            <person name="Bruce D."/>
            <person name="Han C."/>
            <person name="Tapia R."/>
            <person name="Gilna P."/>
            <person name="Schmutz J."/>
            <person name="Larimer F."/>
            <person name="Land M."/>
            <person name="Hauser L."/>
            <person name="Kyrpides N."/>
            <person name="Mikhailova N."/>
            <person name="Wu J.H.D."/>
            <person name="Newcomb M."/>
            <person name="Richardson P."/>
        </authorList>
    </citation>
    <scope>NUCLEOTIDE SEQUENCE [LARGE SCALE GENOMIC DNA]</scope>
    <source>
        <strain>ATCC 27405 / DSM 1237 / JCM 9322 / NBRC 103400 / NCIMB 10682 / NRRL B-4536 / VPI 7372</strain>
    </source>
</reference>
<proteinExistence type="inferred from homology"/>
<protein>
    <recommendedName>
        <fullName evidence="1">Large ribosomal subunit protein bL32</fullName>
    </recommendedName>
    <alternativeName>
        <fullName evidence="2">50S ribosomal protein L32</fullName>
    </alternativeName>
</protein>
<dbReference type="EMBL" id="CP000568">
    <property type="protein sequence ID" value="ABN52258.1"/>
    <property type="molecule type" value="Genomic_DNA"/>
</dbReference>
<dbReference type="RefSeq" id="WP_003515606.1">
    <property type="nucleotide sequence ID" value="NC_009012.1"/>
</dbReference>
<dbReference type="SMR" id="A3DE79"/>
<dbReference type="STRING" id="203119.Cthe_1026"/>
<dbReference type="GeneID" id="35804036"/>
<dbReference type="KEGG" id="cth:Cthe_1026"/>
<dbReference type="eggNOG" id="COG0333">
    <property type="taxonomic scope" value="Bacteria"/>
</dbReference>
<dbReference type="HOGENOM" id="CLU_129084_1_3_9"/>
<dbReference type="OrthoDB" id="9812874at2"/>
<dbReference type="Proteomes" id="UP000002145">
    <property type="component" value="Chromosome"/>
</dbReference>
<dbReference type="GO" id="GO:0015934">
    <property type="term" value="C:large ribosomal subunit"/>
    <property type="evidence" value="ECO:0007669"/>
    <property type="project" value="InterPro"/>
</dbReference>
<dbReference type="GO" id="GO:0003735">
    <property type="term" value="F:structural constituent of ribosome"/>
    <property type="evidence" value="ECO:0007669"/>
    <property type="project" value="InterPro"/>
</dbReference>
<dbReference type="GO" id="GO:0006412">
    <property type="term" value="P:translation"/>
    <property type="evidence" value="ECO:0007669"/>
    <property type="project" value="UniProtKB-UniRule"/>
</dbReference>
<dbReference type="HAMAP" id="MF_00340">
    <property type="entry name" value="Ribosomal_bL32"/>
    <property type="match status" value="1"/>
</dbReference>
<dbReference type="InterPro" id="IPR002677">
    <property type="entry name" value="Ribosomal_bL32"/>
</dbReference>
<dbReference type="InterPro" id="IPR044957">
    <property type="entry name" value="Ribosomal_bL32_bact"/>
</dbReference>
<dbReference type="InterPro" id="IPR011332">
    <property type="entry name" value="Ribosomal_zn-bd"/>
</dbReference>
<dbReference type="NCBIfam" id="TIGR01031">
    <property type="entry name" value="rpmF_bact"/>
    <property type="match status" value="1"/>
</dbReference>
<dbReference type="PANTHER" id="PTHR35534">
    <property type="entry name" value="50S RIBOSOMAL PROTEIN L32"/>
    <property type="match status" value="1"/>
</dbReference>
<dbReference type="PANTHER" id="PTHR35534:SF1">
    <property type="entry name" value="LARGE RIBOSOMAL SUBUNIT PROTEIN BL32"/>
    <property type="match status" value="1"/>
</dbReference>
<dbReference type="Pfam" id="PF01783">
    <property type="entry name" value="Ribosomal_L32p"/>
    <property type="match status" value="1"/>
</dbReference>
<dbReference type="SUPFAM" id="SSF57829">
    <property type="entry name" value="Zn-binding ribosomal proteins"/>
    <property type="match status" value="1"/>
</dbReference>
<keyword id="KW-1185">Reference proteome</keyword>
<keyword id="KW-0687">Ribonucleoprotein</keyword>
<keyword id="KW-0689">Ribosomal protein</keyword>
<accession>A3DE79</accession>
<evidence type="ECO:0000255" key="1">
    <source>
        <dbReference type="HAMAP-Rule" id="MF_00340"/>
    </source>
</evidence>
<evidence type="ECO:0000305" key="2"/>
<gene>
    <name evidence="1" type="primary">rpmF</name>
    <name type="ordered locus">Cthe_1026</name>
</gene>